<dbReference type="EMBL" id="AC027319">
    <property type="status" value="NOT_ANNOTATED_CDS"/>
    <property type="molecule type" value="Genomic_DNA"/>
</dbReference>
<dbReference type="EMBL" id="CH471139">
    <property type="protein sequence ID" value="EAW69191.1"/>
    <property type="status" value="ALT_INIT"/>
    <property type="molecule type" value="Genomic_DNA"/>
</dbReference>
<dbReference type="RefSeq" id="NP_001073992.1">
    <property type="nucleotide sequence ID" value="NM_001080523.1"/>
</dbReference>
<dbReference type="SMR" id="A6NEK1"/>
<dbReference type="BioGRID" id="570456">
    <property type="interactions" value="42"/>
</dbReference>
<dbReference type="FunCoup" id="A6NEK1">
    <property type="interactions" value="2"/>
</dbReference>
<dbReference type="IntAct" id="A6NEK1">
    <property type="interactions" value="40"/>
</dbReference>
<dbReference type="MINT" id="A6NEK1"/>
<dbReference type="STRING" id="9606.ENSP00000371200"/>
<dbReference type="GlyGen" id="A6NEK1">
    <property type="glycosylation" value="1 site, 1 O-linked glycan (1 site)"/>
</dbReference>
<dbReference type="iPTMnet" id="A6NEK1"/>
<dbReference type="PhosphoSitePlus" id="A6NEK1"/>
<dbReference type="BioMuta" id="ARRDC5"/>
<dbReference type="MassIVE" id="A6NEK1"/>
<dbReference type="PaxDb" id="9606-ENSP00000371200"/>
<dbReference type="PeptideAtlas" id="A6NEK1"/>
<dbReference type="ProteomicsDB" id="987"/>
<dbReference type="Antibodypedia" id="64955">
    <property type="antibodies" value="56 antibodies from 12 providers"/>
</dbReference>
<dbReference type="DNASU" id="645432"/>
<dbReference type="GeneID" id="645432"/>
<dbReference type="KEGG" id="hsa:645432"/>
<dbReference type="UCSC" id="uc002mbm.3">
    <property type="organism name" value="human"/>
</dbReference>
<dbReference type="AGR" id="HGNC:31407"/>
<dbReference type="CTD" id="645432"/>
<dbReference type="DisGeNET" id="645432"/>
<dbReference type="GeneCards" id="ARRDC5"/>
<dbReference type="HGNC" id="HGNC:31407">
    <property type="gene designation" value="ARRDC5"/>
</dbReference>
<dbReference type="HPA" id="ENSG00000205784">
    <property type="expression patterns" value="Tissue enriched (testis)"/>
</dbReference>
<dbReference type="MIM" id="620944">
    <property type="type" value="gene"/>
</dbReference>
<dbReference type="neXtProt" id="NX_A6NEK1"/>
<dbReference type="VEuPathDB" id="HostDB:ENSG00000205784"/>
<dbReference type="eggNOG" id="KOG3780">
    <property type="taxonomic scope" value="Eukaryota"/>
</dbReference>
<dbReference type="HOGENOM" id="CLU_855171_0_0_1"/>
<dbReference type="InParanoid" id="A6NEK1"/>
<dbReference type="OrthoDB" id="7785529at2759"/>
<dbReference type="PAN-GO" id="A6NEK1">
    <property type="GO annotations" value="4 GO annotations based on evolutionary models"/>
</dbReference>
<dbReference type="PhylomeDB" id="A6NEK1"/>
<dbReference type="TreeFam" id="TF313650"/>
<dbReference type="PathwayCommons" id="A6NEK1"/>
<dbReference type="SignaLink" id="A6NEK1"/>
<dbReference type="BioGRID-ORCS" id="645432">
    <property type="hits" value="13 hits in 1135 CRISPR screens"/>
</dbReference>
<dbReference type="ChiTaRS" id="ARRDC5">
    <property type="organism name" value="human"/>
</dbReference>
<dbReference type="GenomeRNAi" id="645432"/>
<dbReference type="Pharos" id="A6NEK1">
    <property type="development level" value="Tbio"/>
</dbReference>
<dbReference type="PRO" id="PR:A6NEK1"/>
<dbReference type="Proteomes" id="UP000005640">
    <property type="component" value="Chromosome 19"/>
</dbReference>
<dbReference type="RNAct" id="A6NEK1">
    <property type="molecule type" value="protein"/>
</dbReference>
<dbReference type="Bgee" id="ENSG00000205784">
    <property type="expression patterns" value="Expressed in left testis and 69 other cell types or tissues"/>
</dbReference>
<dbReference type="ExpressionAtlas" id="A6NEK1">
    <property type="expression patterns" value="baseline and differential"/>
</dbReference>
<dbReference type="GO" id="GO:0005737">
    <property type="term" value="C:cytoplasm"/>
    <property type="evidence" value="ECO:0000318"/>
    <property type="project" value="GO_Central"/>
</dbReference>
<dbReference type="GO" id="GO:0005768">
    <property type="term" value="C:endosome"/>
    <property type="evidence" value="ECO:0000318"/>
    <property type="project" value="GO_Central"/>
</dbReference>
<dbReference type="GO" id="GO:0016020">
    <property type="term" value="C:membrane"/>
    <property type="evidence" value="ECO:0000250"/>
    <property type="project" value="UniProtKB"/>
</dbReference>
<dbReference type="GO" id="GO:0005886">
    <property type="term" value="C:plasma membrane"/>
    <property type="evidence" value="ECO:0000318"/>
    <property type="project" value="GO_Central"/>
</dbReference>
<dbReference type="GO" id="GO:0030154">
    <property type="term" value="P:cell differentiation"/>
    <property type="evidence" value="ECO:0007669"/>
    <property type="project" value="UniProtKB-KW"/>
</dbReference>
<dbReference type="GO" id="GO:0015031">
    <property type="term" value="P:protein transport"/>
    <property type="evidence" value="ECO:0000318"/>
    <property type="project" value="GO_Central"/>
</dbReference>
<dbReference type="GO" id="GO:0007283">
    <property type="term" value="P:spermatogenesis"/>
    <property type="evidence" value="ECO:0000250"/>
    <property type="project" value="UniProtKB"/>
</dbReference>
<dbReference type="Gene3D" id="2.60.40.640">
    <property type="match status" value="2"/>
</dbReference>
<dbReference type="InterPro" id="IPR014752">
    <property type="entry name" value="Arrestin-like_C"/>
</dbReference>
<dbReference type="InterPro" id="IPR011021">
    <property type="entry name" value="Arrestin-like_N"/>
</dbReference>
<dbReference type="InterPro" id="IPR011022">
    <property type="entry name" value="Arrestin_C-like"/>
</dbReference>
<dbReference type="InterPro" id="IPR050357">
    <property type="entry name" value="Arrestin_domain-protein"/>
</dbReference>
<dbReference type="InterPro" id="IPR014756">
    <property type="entry name" value="Ig_E-set"/>
</dbReference>
<dbReference type="PANTHER" id="PTHR11188">
    <property type="entry name" value="ARRESTIN DOMAIN CONTAINING PROTEIN"/>
    <property type="match status" value="1"/>
</dbReference>
<dbReference type="PANTHER" id="PTHR11188:SF172">
    <property type="entry name" value="ARRESTIN DOMAIN-CONTAINING PROTEIN 5"/>
    <property type="match status" value="1"/>
</dbReference>
<dbReference type="Pfam" id="PF02752">
    <property type="entry name" value="Arrestin_C"/>
    <property type="match status" value="1"/>
</dbReference>
<dbReference type="Pfam" id="PF00339">
    <property type="entry name" value="Arrestin_N"/>
    <property type="match status" value="1"/>
</dbReference>
<dbReference type="SMART" id="SM01017">
    <property type="entry name" value="Arrestin_C"/>
    <property type="match status" value="1"/>
</dbReference>
<dbReference type="SUPFAM" id="SSF81296">
    <property type="entry name" value="E set domains"/>
    <property type="match status" value="2"/>
</dbReference>
<reference key="1">
    <citation type="journal article" date="2004" name="Nature">
        <title>The DNA sequence and biology of human chromosome 19.</title>
        <authorList>
            <person name="Grimwood J."/>
            <person name="Gordon L.A."/>
            <person name="Olsen A.S."/>
            <person name="Terry A."/>
            <person name="Schmutz J."/>
            <person name="Lamerdin J.E."/>
            <person name="Hellsten U."/>
            <person name="Goodstein D."/>
            <person name="Couronne O."/>
            <person name="Tran-Gyamfi M."/>
            <person name="Aerts A."/>
            <person name="Altherr M."/>
            <person name="Ashworth L."/>
            <person name="Bajorek E."/>
            <person name="Black S."/>
            <person name="Branscomb E."/>
            <person name="Caenepeel S."/>
            <person name="Carrano A.V."/>
            <person name="Caoile C."/>
            <person name="Chan Y.M."/>
            <person name="Christensen M."/>
            <person name="Cleland C.A."/>
            <person name="Copeland A."/>
            <person name="Dalin E."/>
            <person name="Dehal P."/>
            <person name="Denys M."/>
            <person name="Detter J.C."/>
            <person name="Escobar J."/>
            <person name="Flowers D."/>
            <person name="Fotopulos D."/>
            <person name="Garcia C."/>
            <person name="Georgescu A.M."/>
            <person name="Glavina T."/>
            <person name="Gomez M."/>
            <person name="Gonzales E."/>
            <person name="Groza M."/>
            <person name="Hammon N."/>
            <person name="Hawkins T."/>
            <person name="Haydu L."/>
            <person name="Ho I."/>
            <person name="Huang W."/>
            <person name="Israni S."/>
            <person name="Jett J."/>
            <person name="Kadner K."/>
            <person name="Kimball H."/>
            <person name="Kobayashi A."/>
            <person name="Larionov V."/>
            <person name="Leem S.-H."/>
            <person name="Lopez F."/>
            <person name="Lou Y."/>
            <person name="Lowry S."/>
            <person name="Malfatti S."/>
            <person name="Martinez D."/>
            <person name="McCready P.M."/>
            <person name="Medina C."/>
            <person name="Morgan J."/>
            <person name="Nelson K."/>
            <person name="Nolan M."/>
            <person name="Ovcharenko I."/>
            <person name="Pitluck S."/>
            <person name="Pollard M."/>
            <person name="Popkie A.P."/>
            <person name="Predki P."/>
            <person name="Quan G."/>
            <person name="Ramirez L."/>
            <person name="Rash S."/>
            <person name="Retterer J."/>
            <person name="Rodriguez A."/>
            <person name="Rogers S."/>
            <person name="Salamov A."/>
            <person name="Salazar A."/>
            <person name="She X."/>
            <person name="Smith D."/>
            <person name="Slezak T."/>
            <person name="Solovyev V."/>
            <person name="Thayer N."/>
            <person name="Tice H."/>
            <person name="Tsai M."/>
            <person name="Ustaszewska A."/>
            <person name="Vo N."/>
            <person name="Wagner M."/>
            <person name="Wheeler J."/>
            <person name="Wu K."/>
            <person name="Xie G."/>
            <person name="Yang J."/>
            <person name="Dubchak I."/>
            <person name="Furey T.S."/>
            <person name="DeJong P."/>
            <person name="Dickson M."/>
            <person name="Gordon D."/>
            <person name="Eichler E.E."/>
            <person name="Pennacchio L.A."/>
            <person name="Richardson P."/>
            <person name="Stubbs L."/>
            <person name="Rokhsar D.S."/>
            <person name="Myers R.M."/>
            <person name="Rubin E.M."/>
            <person name="Lucas S.M."/>
        </authorList>
    </citation>
    <scope>NUCLEOTIDE SEQUENCE [LARGE SCALE GENOMIC DNA]</scope>
</reference>
<reference key="2">
    <citation type="submission" date="2005-09" db="EMBL/GenBank/DDBJ databases">
        <authorList>
            <person name="Mural R.J."/>
            <person name="Istrail S."/>
            <person name="Sutton G.G."/>
            <person name="Florea L."/>
            <person name="Halpern A.L."/>
            <person name="Mobarry C.M."/>
            <person name="Lippert R."/>
            <person name="Walenz B."/>
            <person name="Shatkay H."/>
            <person name="Dew I."/>
            <person name="Miller J.R."/>
            <person name="Flanigan M.J."/>
            <person name="Edwards N.J."/>
            <person name="Bolanos R."/>
            <person name="Fasulo D."/>
            <person name="Halldorsson B.V."/>
            <person name="Hannenhalli S."/>
            <person name="Turner R."/>
            <person name="Yooseph S."/>
            <person name="Lu F."/>
            <person name="Nusskern D.R."/>
            <person name="Shue B.C."/>
            <person name="Zheng X.H."/>
            <person name="Zhong F."/>
            <person name="Delcher A.L."/>
            <person name="Huson D.H."/>
            <person name="Kravitz S.A."/>
            <person name="Mouchard L."/>
            <person name="Reinert K."/>
            <person name="Remington K.A."/>
            <person name="Clark A.G."/>
            <person name="Waterman M.S."/>
            <person name="Eichler E.E."/>
            <person name="Adams M.D."/>
            <person name="Hunkapiller M.W."/>
            <person name="Myers E.W."/>
            <person name="Venter J.C."/>
        </authorList>
    </citation>
    <scope>NUCLEOTIDE SEQUENCE [LARGE SCALE GENOMIC DNA]</scope>
</reference>
<reference key="3">
    <citation type="journal article" date="2023" name="Nat. Commun.">
        <title>ARRDC5 expression is conserved in mammalian testes and required for normal sperm morphogenesis.</title>
        <authorList>
            <person name="Giassetti M.I."/>
            <person name="Miao D."/>
            <person name="Law N.C."/>
            <person name="Oatley M.J."/>
            <person name="Park J."/>
            <person name="Robinson L.D."/>
            <person name="Maddison L.A."/>
            <person name="Bernhardt M.L."/>
            <person name="Oatley J.M."/>
        </authorList>
    </citation>
    <scope>TISSUE SPECIFICITY</scope>
</reference>
<gene>
    <name type="primary">ARRDC5</name>
</gene>
<name>ARRD5_HUMAN</name>
<proteinExistence type="evidence at protein level"/>
<keyword id="KW-0221">Differentiation</keyword>
<keyword id="KW-0472">Membrane</keyword>
<keyword id="KW-1267">Proteomics identification</keyword>
<keyword id="KW-1185">Reference proteome</keyword>
<keyword id="KW-0744">Spermatogenesis</keyword>
<evidence type="ECO:0000250" key="1">
    <source>
        <dbReference type="UniProtKB" id="Q497K5"/>
    </source>
</evidence>
<evidence type="ECO:0000269" key="2">
    <source>
    </source>
</evidence>
<evidence type="ECO:0000305" key="3"/>
<accession>A6NEK1</accession>
<comment type="function">
    <text evidence="1">Plays an essential role in spermatogenesis. May be involved in the anchoring of the sperm head to the tail during spermatogenesis by affecting SEC22A-mediated SUN5 and NDC1 transport and localization.</text>
</comment>
<comment type="subcellular location">
    <subcellularLocation>
        <location evidence="1">Membrane</location>
    </subcellularLocation>
</comment>
<comment type="tissue specificity">
    <text evidence="2">Testis-enriched.</text>
</comment>
<comment type="similarity">
    <text evidence="3">Belongs to the arrestin family.</text>
</comment>
<comment type="caution">
    <text evidence="3">It is uncertain whether Met-1 or Met-15 is the initiator.</text>
</comment>
<comment type="sequence caution" evidence="3">
    <conflict type="erroneous initiation">
        <sequence resource="EMBL-CDS" id="EAW69191"/>
    </conflict>
    <text>Truncated N-terminus.</text>
</comment>
<feature type="chain" id="PRO_0000309620" description="Arrestin domain-containing protein 5">
    <location>
        <begin position="1"/>
        <end position="342"/>
    </location>
</feature>
<organism>
    <name type="scientific">Homo sapiens</name>
    <name type="common">Human</name>
    <dbReference type="NCBI Taxonomy" id="9606"/>
    <lineage>
        <taxon>Eukaryota</taxon>
        <taxon>Metazoa</taxon>
        <taxon>Chordata</taxon>
        <taxon>Craniata</taxon>
        <taxon>Vertebrata</taxon>
        <taxon>Euteleostomi</taxon>
        <taxon>Mammalia</taxon>
        <taxon>Eutheria</taxon>
        <taxon>Euarchontoglires</taxon>
        <taxon>Primates</taxon>
        <taxon>Haplorrhini</taxon>
        <taxon>Catarrhini</taxon>
        <taxon>Hominidae</taxon>
        <taxon>Homo</taxon>
    </lineage>
</organism>
<protein>
    <recommendedName>
        <fullName>Arrestin domain-containing protein 5</fullName>
    </recommendedName>
</protein>
<sequence>MGDREECLSTPQPPMSVVKSIELVLPEDRIYLAGSSIKGQVILTLNSTLVDPIVKVELVGRGYVEWSEEAGASCDYSRNVICNNKADYVHKTKTFPVEDNWLSAGSHTFDFHFNLPPRLPSTFTSKFGHVFYFVQASCMGREHILAKKRMYLLVQGTSTFHKETPFQNPLFVEAEEKVSYNCCRQGTVCLQIQMERNTFTPGEKVVFTTEINNQTSKCIKTVVFALYAHIQYEGFTPSAERRSRLDSSELLRQEANTPVTRFNTTKVVSTFNLPLLLSVSSSTQDGEIMHTRYELVTTVHLPWSLTSLKAKVPIIITSASVDSAICQLSEDGVLPVNPDHQN</sequence>